<feature type="signal peptide" evidence="3">
    <location>
        <begin position="1"/>
        <end position="15"/>
    </location>
</feature>
<feature type="propeptide" id="PRO_0000436776" description="Activation peptide" evidence="1">
    <location>
        <begin position="16"/>
        <end position="62"/>
    </location>
</feature>
<feature type="chain" id="PRO_0000436777" description="Pepsin A-5" evidence="7">
    <location>
        <begin position="63"/>
        <end position="387"/>
    </location>
</feature>
<feature type="domain" description="Peptidase A1" evidence="4">
    <location>
        <begin position="74"/>
        <end position="384"/>
    </location>
</feature>
<feature type="active site" evidence="4">
    <location>
        <position position="92"/>
    </location>
</feature>
<feature type="active site" evidence="4">
    <location>
        <position position="275"/>
    </location>
</feature>
<feature type="disulfide bond" evidence="1">
    <location>
        <begin position="105"/>
        <end position="110"/>
    </location>
</feature>
<feature type="disulfide bond" evidence="1">
    <location>
        <begin position="266"/>
        <end position="270"/>
    </location>
</feature>
<feature type="disulfide bond" evidence="4">
    <location>
        <begin position="309"/>
        <end position="343"/>
    </location>
</feature>
<feature type="sequence conflict" description="In Ref. 1; AAF61241." evidence="7" ref="1">
    <original>V</original>
    <variation>G</variation>
    <location>
        <position position="176"/>
    </location>
</feature>
<reference evidence="9" key="1">
    <citation type="journal article" date="2001" name="Biol. Reprod.">
        <title>An aspartic proteinase expressed in the yolk sac and neonatal stomach of the mouse.</title>
        <authorList>
            <person name="Chen X."/>
            <person name="Rosenfeld C.S."/>
            <person name="Roberts R.M."/>
            <person name="Green J.A."/>
        </authorList>
    </citation>
    <scope>NUCLEOTIDE SEQUENCE [MRNA]</scope>
    <scope>FUNCTION</scope>
    <scope>CATALYTIC ACTIVITY</scope>
    <scope>ACTIVITY REGULATION</scope>
    <scope>TISSUE SPECIFICITY</scope>
    <scope>DEVELOPMENTAL STAGE</scope>
</reference>
<reference evidence="11" key="2">
    <citation type="journal article" date="2005" name="Science">
        <title>The transcriptional landscape of the mammalian genome.</title>
        <authorList>
            <person name="Carninci P."/>
            <person name="Kasukawa T."/>
            <person name="Katayama S."/>
            <person name="Gough J."/>
            <person name="Frith M.C."/>
            <person name="Maeda N."/>
            <person name="Oyama R."/>
            <person name="Ravasi T."/>
            <person name="Lenhard B."/>
            <person name="Wells C."/>
            <person name="Kodzius R."/>
            <person name="Shimokawa K."/>
            <person name="Bajic V.B."/>
            <person name="Brenner S.E."/>
            <person name="Batalov S."/>
            <person name="Forrest A.R."/>
            <person name="Zavolan M."/>
            <person name="Davis M.J."/>
            <person name="Wilming L.G."/>
            <person name="Aidinis V."/>
            <person name="Allen J.E."/>
            <person name="Ambesi-Impiombato A."/>
            <person name="Apweiler R."/>
            <person name="Aturaliya R.N."/>
            <person name="Bailey T.L."/>
            <person name="Bansal M."/>
            <person name="Baxter L."/>
            <person name="Beisel K.W."/>
            <person name="Bersano T."/>
            <person name="Bono H."/>
            <person name="Chalk A.M."/>
            <person name="Chiu K.P."/>
            <person name="Choudhary V."/>
            <person name="Christoffels A."/>
            <person name="Clutterbuck D.R."/>
            <person name="Crowe M.L."/>
            <person name="Dalla E."/>
            <person name="Dalrymple B.P."/>
            <person name="de Bono B."/>
            <person name="Della Gatta G."/>
            <person name="di Bernardo D."/>
            <person name="Down T."/>
            <person name="Engstrom P."/>
            <person name="Fagiolini M."/>
            <person name="Faulkner G."/>
            <person name="Fletcher C.F."/>
            <person name="Fukushima T."/>
            <person name="Furuno M."/>
            <person name="Futaki S."/>
            <person name="Gariboldi M."/>
            <person name="Georgii-Hemming P."/>
            <person name="Gingeras T.R."/>
            <person name="Gojobori T."/>
            <person name="Green R.E."/>
            <person name="Gustincich S."/>
            <person name="Harbers M."/>
            <person name="Hayashi Y."/>
            <person name="Hensch T.K."/>
            <person name="Hirokawa N."/>
            <person name="Hill D."/>
            <person name="Huminiecki L."/>
            <person name="Iacono M."/>
            <person name="Ikeo K."/>
            <person name="Iwama A."/>
            <person name="Ishikawa T."/>
            <person name="Jakt M."/>
            <person name="Kanapin A."/>
            <person name="Katoh M."/>
            <person name="Kawasawa Y."/>
            <person name="Kelso J."/>
            <person name="Kitamura H."/>
            <person name="Kitano H."/>
            <person name="Kollias G."/>
            <person name="Krishnan S.P."/>
            <person name="Kruger A."/>
            <person name="Kummerfeld S.K."/>
            <person name="Kurochkin I.V."/>
            <person name="Lareau L.F."/>
            <person name="Lazarevic D."/>
            <person name="Lipovich L."/>
            <person name="Liu J."/>
            <person name="Liuni S."/>
            <person name="McWilliam S."/>
            <person name="Madan Babu M."/>
            <person name="Madera M."/>
            <person name="Marchionni L."/>
            <person name="Matsuda H."/>
            <person name="Matsuzawa S."/>
            <person name="Miki H."/>
            <person name="Mignone F."/>
            <person name="Miyake S."/>
            <person name="Morris K."/>
            <person name="Mottagui-Tabar S."/>
            <person name="Mulder N."/>
            <person name="Nakano N."/>
            <person name="Nakauchi H."/>
            <person name="Ng P."/>
            <person name="Nilsson R."/>
            <person name="Nishiguchi S."/>
            <person name="Nishikawa S."/>
            <person name="Nori F."/>
            <person name="Ohara O."/>
            <person name="Okazaki Y."/>
            <person name="Orlando V."/>
            <person name="Pang K.C."/>
            <person name="Pavan W.J."/>
            <person name="Pavesi G."/>
            <person name="Pesole G."/>
            <person name="Petrovsky N."/>
            <person name="Piazza S."/>
            <person name="Reed J."/>
            <person name="Reid J.F."/>
            <person name="Ring B.Z."/>
            <person name="Ringwald M."/>
            <person name="Rost B."/>
            <person name="Ruan Y."/>
            <person name="Salzberg S.L."/>
            <person name="Sandelin A."/>
            <person name="Schneider C."/>
            <person name="Schoenbach C."/>
            <person name="Sekiguchi K."/>
            <person name="Semple C.A."/>
            <person name="Seno S."/>
            <person name="Sessa L."/>
            <person name="Sheng Y."/>
            <person name="Shibata Y."/>
            <person name="Shimada H."/>
            <person name="Shimada K."/>
            <person name="Silva D."/>
            <person name="Sinclair B."/>
            <person name="Sperling S."/>
            <person name="Stupka E."/>
            <person name="Sugiura K."/>
            <person name="Sultana R."/>
            <person name="Takenaka Y."/>
            <person name="Taki K."/>
            <person name="Tammoja K."/>
            <person name="Tan S.L."/>
            <person name="Tang S."/>
            <person name="Taylor M.S."/>
            <person name="Tegner J."/>
            <person name="Teichmann S.A."/>
            <person name="Ueda H.R."/>
            <person name="van Nimwegen E."/>
            <person name="Verardo R."/>
            <person name="Wei C.L."/>
            <person name="Yagi K."/>
            <person name="Yamanishi H."/>
            <person name="Zabarovsky E."/>
            <person name="Zhu S."/>
            <person name="Zimmer A."/>
            <person name="Hide W."/>
            <person name="Bult C."/>
            <person name="Grimmond S.M."/>
            <person name="Teasdale R.D."/>
            <person name="Liu E.T."/>
            <person name="Brusic V."/>
            <person name="Quackenbush J."/>
            <person name="Wahlestedt C."/>
            <person name="Mattick J.S."/>
            <person name="Hume D.A."/>
            <person name="Kai C."/>
            <person name="Sasaki D."/>
            <person name="Tomaru Y."/>
            <person name="Fukuda S."/>
            <person name="Kanamori-Katayama M."/>
            <person name="Suzuki M."/>
            <person name="Aoki J."/>
            <person name="Arakawa T."/>
            <person name="Iida J."/>
            <person name="Imamura K."/>
            <person name="Itoh M."/>
            <person name="Kato T."/>
            <person name="Kawaji H."/>
            <person name="Kawagashira N."/>
            <person name="Kawashima T."/>
            <person name="Kojima M."/>
            <person name="Kondo S."/>
            <person name="Konno H."/>
            <person name="Nakano K."/>
            <person name="Ninomiya N."/>
            <person name="Nishio T."/>
            <person name="Okada M."/>
            <person name="Plessy C."/>
            <person name="Shibata K."/>
            <person name="Shiraki T."/>
            <person name="Suzuki S."/>
            <person name="Tagami M."/>
            <person name="Waki K."/>
            <person name="Watahiki A."/>
            <person name="Okamura-Oho Y."/>
            <person name="Suzuki H."/>
            <person name="Kawai J."/>
            <person name="Hayashizaki Y."/>
        </authorList>
    </citation>
    <scope>NUCLEOTIDE SEQUENCE [LARGE SCALE MRNA]</scope>
    <source>
        <strain evidence="11">C57BL/6J</strain>
        <tissue evidence="12">Oviduct</tissue>
        <tissue evidence="13">Stomach</tissue>
    </source>
</reference>
<reference evidence="15" key="3">
    <citation type="journal article" date="2009" name="PLoS Biol.">
        <title>Lineage-specific biology revealed by a finished genome assembly of the mouse.</title>
        <authorList>
            <person name="Church D.M."/>
            <person name="Goodstadt L."/>
            <person name="Hillier L.W."/>
            <person name="Zody M.C."/>
            <person name="Goldstein S."/>
            <person name="She X."/>
            <person name="Bult C.J."/>
            <person name="Agarwala R."/>
            <person name="Cherry J.L."/>
            <person name="DiCuccio M."/>
            <person name="Hlavina W."/>
            <person name="Kapustin Y."/>
            <person name="Meric P."/>
            <person name="Maglott D."/>
            <person name="Birtle Z."/>
            <person name="Marques A.C."/>
            <person name="Graves T."/>
            <person name="Zhou S."/>
            <person name="Teague B."/>
            <person name="Potamousis K."/>
            <person name="Churas C."/>
            <person name="Place M."/>
            <person name="Herschleb J."/>
            <person name="Runnheim R."/>
            <person name="Forrest D."/>
            <person name="Amos-Landgraf J."/>
            <person name="Schwartz D.C."/>
            <person name="Cheng Z."/>
            <person name="Lindblad-Toh K."/>
            <person name="Eichler E.E."/>
            <person name="Ponting C.P."/>
        </authorList>
    </citation>
    <scope>NUCLEOTIDE SEQUENCE [LARGE SCALE GENOMIC DNA]</scope>
    <source>
        <strain evidence="15">C57BL/6J</strain>
    </source>
</reference>
<reference evidence="10" key="4">
    <citation type="journal article" date="2004" name="Genome Res.">
        <title>The status, quality, and expansion of the NIH full-length cDNA project: the Mammalian Gene Collection (MGC).</title>
        <authorList>
            <consortium name="The MGC Project Team"/>
        </authorList>
    </citation>
    <scope>NUCLEOTIDE SEQUENCE [LARGE SCALE MRNA]</scope>
    <source>
        <tissue>Brain</tissue>
        <tissue>Colon</tissue>
        <tissue>Kidney</tissue>
        <tissue evidence="10">Stomach</tissue>
    </source>
</reference>
<organism evidence="9">
    <name type="scientific">Mus musculus</name>
    <name type="common">Mouse</name>
    <dbReference type="NCBI Taxonomy" id="10090"/>
    <lineage>
        <taxon>Eukaryota</taxon>
        <taxon>Metazoa</taxon>
        <taxon>Chordata</taxon>
        <taxon>Craniata</taxon>
        <taxon>Vertebrata</taxon>
        <taxon>Euteleostomi</taxon>
        <taxon>Mammalia</taxon>
        <taxon>Eutheria</taxon>
        <taxon>Euarchontoglires</taxon>
        <taxon>Glires</taxon>
        <taxon>Rodentia</taxon>
        <taxon>Myomorpha</taxon>
        <taxon>Muroidea</taxon>
        <taxon>Muridae</taxon>
        <taxon>Murinae</taxon>
        <taxon>Mus</taxon>
        <taxon>Mus</taxon>
    </lineage>
</organism>
<accession>Q9D106</accession>
<accession>Q9JKE6</accession>
<dbReference type="EC" id="3.4.23.1" evidence="5"/>
<dbReference type="EMBL" id="AF240776">
    <property type="protein sequence ID" value="AAF61241.1"/>
    <property type="molecule type" value="mRNA"/>
</dbReference>
<dbReference type="EMBL" id="AK004109">
    <property type="protein sequence ID" value="BAB23174.1"/>
    <property type="molecule type" value="mRNA"/>
</dbReference>
<dbReference type="EMBL" id="AK053965">
    <property type="protein sequence ID" value="BAC35604.1"/>
    <property type="molecule type" value="mRNA"/>
</dbReference>
<dbReference type="EMBL" id="AK168924">
    <property type="protein sequence ID" value="BAE40737.1"/>
    <property type="molecule type" value="mRNA"/>
</dbReference>
<dbReference type="EMBL" id="AC132247">
    <property type="status" value="NOT_ANNOTATED_CDS"/>
    <property type="molecule type" value="Genomic_DNA"/>
</dbReference>
<dbReference type="EMBL" id="BC119523">
    <property type="protein sequence ID" value="AAI19524.1"/>
    <property type="molecule type" value="mRNA"/>
</dbReference>
<dbReference type="CCDS" id="CCDS29584.1"/>
<dbReference type="RefSeq" id="NP_067428.2">
    <property type="nucleotide sequence ID" value="NM_021453.4"/>
</dbReference>
<dbReference type="SMR" id="Q9D106"/>
<dbReference type="FunCoup" id="Q9D106">
    <property type="interactions" value="109"/>
</dbReference>
<dbReference type="STRING" id="10090.ENSMUSP00000025647"/>
<dbReference type="MEROPS" id="A01.051"/>
<dbReference type="PhosphoSitePlus" id="Q9D106"/>
<dbReference type="PaxDb" id="10090-ENSMUSP00000025647"/>
<dbReference type="ProteomicsDB" id="287914"/>
<dbReference type="DNASU" id="58803"/>
<dbReference type="Ensembl" id="ENSMUST00000025647.7">
    <property type="protein sequence ID" value="ENSMUSP00000025647.6"/>
    <property type="gene ID" value="ENSMUSG00000024738.7"/>
</dbReference>
<dbReference type="GeneID" id="58803"/>
<dbReference type="KEGG" id="mmu:58803"/>
<dbReference type="UCSC" id="uc008gqp.2">
    <property type="organism name" value="mouse"/>
</dbReference>
<dbReference type="AGR" id="MGI:1915935"/>
<dbReference type="CTD" id="5222"/>
<dbReference type="MGI" id="MGI:1915935">
    <property type="gene designation" value="Pga5"/>
</dbReference>
<dbReference type="VEuPathDB" id="HostDB:ENSMUSG00000024738"/>
<dbReference type="eggNOG" id="KOG1339">
    <property type="taxonomic scope" value="Eukaryota"/>
</dbReference>
<dbReference type="GeneTree" id="ENSGT00940000153747"/>
<dbReference type="HOGENOM" id="CLU_013253_3_0_1"/>
<dbReference type="InParanoid" id="Q9D106"/>
<dbReference type="OMA" id="MKWFGVL"/>
<dbReference type="OrthoDB" id="771136at2759"/>
<dbReference type="PhylomeDB" id="Q9D106"/>
<dbReference type="TreeFam" id="TF314990"/>
<dbReference type="BioGRID-ORCS" id="58803">
    <property type="hits" value="3 hits in 77 CRISPR screens"/>
</dbReference>
<dbReference type="PRO" id="PR:Q9D106"/>
<dbReference type="Proteomes" id="UP000000589">
    <property type="component" value="Chromosome 19"/>
</dbReference>
<dbReference type="RNAct" id="Q9D106">
    <property type="molecule type" value="protein"/>
</dbReference>
<dbReference type="Bgee" id="ENSMUSG00000024738">
    <property type="expression patterns" value="Expressed in epithelium of stomach and 49 other cell types or tissues"/>
</dbReference>
<dbReference type="GO" id="GO:0005576">
    <property type="term" value="C:extracellular region"/>
    <property type="evidence" value="ECO:0007669"/>
    <property type="project" value="UniProtKB-SubCell"/>
</dbReference>
<dbReference type="GO" id="GO:0004190">
    <property type="term" value="F:aspartic-type endopeptidase activity"/>
    <property type="evidence" value="ECO:0000314"/>
    <property type="project" value="MGI"/>
</dbReference>
<dbReference type="GO" id="GO:0006508">
    <property type="term" value="P:proteolysis"/>
    <property type="evidence" value="ECO:0007669"/>
    <property type="project" value="UniProtKB-KW"/>
</dbReference>
<dbReference type="FunFam" id="2.40.70.10:FF:000006">
    <property type="entry name" value="Cathepsin E"/>
    <property type="match status" value="1"/>
</dbReference>
<dbReference type="FunFam" id="2.40.70.10:FF:000004">
    <property type="entry name" value="Pepsin A"/>
    <property type="match status" value="1"/>
</dbReference>
<dbReference type="Gene3D" id="6.10.140.60">
    <property type="match status" value="1"/>
</dbReference>
<dbReference type="Gene3D" id="2.40.70.10">
    <property type="entry name" value="Acid Proteases"/>
    <property type="match status" value="2"/>
</dbReference>
<dbReference type="InterPro" id="IPR001461">
    <property type="entry name" value="Aspartic_peptidase_A1"/>
</dbReference>
<dbReference type="InterPro" id="IPR001969">
    <property type="entry name" value="Aspartic_peptidase_AS"/>
</dbReference>
<dbReference type="InterPro" id="IPR012848">
    <property type="entry name" value="Aspartic_peptidase_N"/>
</dbReference>
<dbReference type="InterPro" id="IPR033121">
    <property type="entry name" value="PEPTIDASE_A1"/>
</dbReference>
<dbReference type="InterPro" id="IPR021109">
    <property type="entry name" value="Peptidase_aspartic_dom_sf"/>
</dbReference>
<dbReference type="PANTHER" id="PTHR47966">
    <property type="entry name" value="BETA-SITE APP-CLEAVING ENZYME, ISOFORM A-RELATED"/>
    <property type="match status" value="1"/>
</dbReference>
<dbReference type="PANTHER" id="PTHR47966:SF49">
    <property type="entry name" value="PEPSIN A-5"/>
    <property type="match status" value="1"/>
</dbReference>
<dbReference type="Pfam" id="PF07966">
    <property type="entry name" value="A1_Propeptide"/>
    <property type="match status" value="1"/>
</dbReference>
<dbReference type="Pfam" id="PF00026">
    <property type="entry name" value="Asp"/>
    <property type="match status" value="1"/>
</dbReference>
<dbReference type="PRINTS" id="PR00792">
    <property type="entry name" value="PEPSIN"/>
</dbReference>
<dbReference type="SUPFAM" id="SSF50630">
    <property type="entry name" value="Acid proteases"/>
    <property type="match status" value="1"/>
</dbReference>
<dbReference type="PROSITE" id="PS00141">
    <property type="entry name" value="ASP_PROTEASE"/>
    <property type="match status" value="1"/>
</dbReference>
<dbReference type="PROSITE" id="PS51767">
    <property type="entry name" value="PEPTIDASE_A1"/>
    <property type="match status" value="1"/>
</dbReference>
<name>PEPA5_MOUSE</name>
<proteinExistence type="evidence at protein level"/>
<sequence>MKWLWVLGLVALSECLVKIPLMKIKSMRENLRESQVLKDYLEKYPRSRAHVLLEQRRNPAVTYEPMRNYLDLVYIGIISIGTPPQEFRVVLDTGSSVLWVPSIYCSSPACAHHKAFNPLRSSTFLVSGRPVNVAYGSGEMSGFLAYDTVRIGDLTVVAQAFGLSLEEPGIFMEYAVFDGILGLGYPNLGLQGITPVFDNLWLQGLIPQNLFAFYLSSKDEKGSMLMLGGVDPSYYHGELHWVPVSKPSYWQLAVDSISMNGEVIACDGGCQGIMDTGTSLLTGPRSSIVNIQNLIGAKASGDGEYFLKCDTINTLPDIVFTIGSVTYPVPASAYIRKDRSHNCRSNFEEGMDDPSDPEMWVLGDVFLRLYFTVFDRANNRIGLAPAA</sequence>
<protein>
    <recommendedName>
        <fullName evidence="14">Pepsin A-5</fullName>
        <ecNumber evidence="5">3.4.23.1</ecNumber>
    </recommendedName>
    <alternativeName>
        <fullName evidence="6">Pepsin F</fullName>
    </alternativeName>
</protein>
<evidence type="ECO:0000250" key="1">
    <source>
        <dbReference type="UniProtKB" id="P0DJD9"/>
    </source>
</evidence>
<evidence type="ECO:0000250" key="2">
    <source>
        <dbReference type="UniProtKB" id="Q9N2D4"/>
    </source>
</evidence>
<evidence type="ECO:0000255" key="3"/>
<evidence type="ECO:0000255" key="4">
    <source>
        <dbReference type="PROSITE-ProRule" id="PRU01103"/>
    </source>
</evidence>
<evidence type="ECO:0000269" key="5">
    <source>
    </source>
</evidence>
<evidence type="ECO:0000303" key="6">
    <source>
    </source>
</evidence>
<evidence type="ECO:0000305" key="7"/>
<evidence type="ECO:0000305" key="8">
    <source>
    </source>
</evidence>
<evidence type="ECO:0000312" key="9">
    <source>
        <dbReference type="EMBL" id="AAF61241.1"/>
    </source>
</evidence>
<evidence type="ECO:0000312" key="10">
    <source>
        <dbReference type="EMBL" id="AAI19524.1"/>
    </source>
</evidence>
<evidence type="ECO:0000312" key="11">
    <source>
        <dbReference type="EMBL" id="BAB23174.1"/>
    </source>
</evidence>
<evidence type="ECO:0000312" key="12">
    <source>
        <dbReference type="EMBL" id="BAC35604.1"/>
    </source>
</evidence>
<evidence type="ECO:0000312" key="13">
    <source>
        <dbReference type="EMBL" id="BAE40737.1"/>
    </source>
</evidence>
<evidence type="ECO:0000312" key="14">
    <source>
        <dbReference type="MGI" id="MGI:1915935"/>
    </source>
</evidence>
<evidence type="ECO:0000312" key="15">
    <source>
        <dbReference type="Proteomes" id="UP000000589"/>
    </source>
</evidence>
<keyword id="KW-0064">Aspartyl protease</keyword>
<keyword id="KW-1015">Disulfide bond</keyword>
<keyword id="KW-0378">Hydrolase</keyword>
<keyword id="KW-0645">Protease</keyword>
<keyword id="KW-1185">Reference proteome</keyword>
<keyword id="KW-0964">Secreted</keyword>
<keyword id="KW-0732">Signal</keyword>
<keyword id="KW-0865">Zymogen</keyword>
<gene>
    <name evidence="14" type="primary">Pga5</name>
    <name evidence="6" type="synonym">Pepf</name>
</gene>
<comment type="function">
    <text evidence="2 8">Shows particularly broad specificity; although bonds involving phenylalanine and leucine are preferred, many others are also cleaved to some extent (By similarity). May play a role as a specialized neonatal digestive enzyme (Probable).</text>
</comment>
<comment type="catalytic activity">
    <reaction evidence="5">
        <text>Preferential cleavage: hydrophobic, preferably aromatic, residues in P1 and P1' positions. Cleaves 1-Phe-|-Val-2, 4-Gln-|-His-5, 13-Glu-|-Ala-14, 14-Ala-|-Leu-15, 15-Leu-|-Tyr-16, 16-Tyr-|-Leu-17, 23-Gly-|-Phe-24, 24-Phe-|-Phe-25 and 25-Phe-|-Tyr-26 bonds in the B chain of insulin.</text>
        <dbReference type="EC" id="3.4.23.1"/>
    </reaction>
</comment>
<comment type="activity regulation">
    <text evidence="5">Inhibited by pepstatin A.</text>
</comment>
<comment type="subcellular location">
    <subcellularLocation>
        <location evidence="7">Secreted</location>
    </subcellularLocation>
</comment>
<comment type="tissue specificity">
    <text evidence="5">Expressed in glandular chief cells of the neonatal stomach. Expressed in yolk sacs of the placenta (at protein level).</text>
</comment>
<comment type="developmental stage">
    <text evidence="5">In neonatal stomach, highly expressed for the first two weeks after birth, with rapidly decreasing expression after 17.5 days. In placenta, detected from 11.5 dpc until term.</text>
</comment>
<comment type="similarity">
    <text evidence="4">Belongs to the peptidase A1 family.</text>
</comment>